<proteinExistence type="inferred from homology"/>
<reference key="1">
    <citation type="journal article" date="2004" name="Science">
        <title>A predator unmasked: life cycle of Bdellovibrio bacteriovorus from a genomic perspective.</title>
        <authorList>
            <person name="Rendulic S."/>
            <person name="Jagtap P."/>
            <person name="Rosinus A."/>
            <person name="Eppinger M."/>
            <person name="Baar C."/>
            <person name="Lanz C."/>
            <person name="Keller H."/>
            <person name="Lambert C."/>
            <person name="Evans K.J."/>
            <person name="Goesmann A."/>
            <person name="Meyer F."/>
            <person name="Sockett R.E."/>
            <person name="Schuster S.C."/>
        </authorList>
    </citation>
    <scope>NUCLEOTIDE SEQUENCE [LARGE SCALE GENOMIC DNA]</scope>
    <source>
        <strain>ATCC 15356 / DSM 50701 / NCIMB 9529 / HD100</strain>
    </source>
</reference>
<organism>
    <name type="scientific">Bdellovibrio bacteriovorus (strain ATCC 15356 / DSM 50701 / NCIMB 9529 / HD100)</name>
    <dbReference type="NCBI Taxonomy" id="264462"/>
    <lineage>
        <taxon>Bacteria</taxon>
        <taxon>Pseudomonadati</taxon>
        <taxon>Bdellovibrionota</taxon>
        <taxon>Bdellovibrionia</taxon>
        <taxon>Bdellovibrionales</taxon>
        <taxon>Pseudobdellovibrionaceae</taxon>
        <taxon>Bdellovibrio</taxon>
    </lineage>
</organism>
<name>T23O_BDEBA</name>
<gene>
    <name evidence="1" type="primary">kynA</name>
    <name type="ordered locus">Bd1810</name>
</gene>
<sequence>MKYPPVHYHDYLGLNPLLNAQHPKSTEYGKPAHDELLFIIVHQTYELWFKQILFELDSVLSTFQKPTVAESEMGIASARLERIVSILKLIIGQVDVLETMTPLDFLDFRDMLYPASGFQSYQWRLIETKLGLRIGDRLAYNQSPFYKSLSESQQGEMLNIMNQPSLHDSVEKWLERTPFLQGENFNFWDSYKEAVNKMFQDDITTVKNNPRLPDEEKAKTVAGLEQTLKSFDALFDEEAFNKLRAEGQFRLSYKAMHAALLIQLHRDQPILQTPFRIIRALLDIDETMTTWRYRHALMAMRMLGQKIGTGGSSGHKYLADATAKHKIFGDFFNLTTFFIPRSQVPPLPKAIADRMSFHY</sequence>
<keyword id="KW-0223">Dioxygenase</keyword>
<keyword id="KW-0349">Heme</keyword>
<keyword id="KW-0408">Iron</keyword>
<keyword id="KW-0479">Metal-binding</keyword>
<keyword id="KW-0560">Oxidoreductase</keyword>
<keyword id="KW-1185">Reference proteome</keyword>
<keyword id="KW-0823">Tryptophan catabolism</keyword>
<evidence type="ECO:0000255" key="1">
    <source>
        <dbReference type="HAMAP-Rule" id="MF_01972"/>
    </source>
</evidence>
<accession>Q6MM37</accession>
<comment type="function">
    <text evidence="1">Heme-dependent dioxygenase that catalyzes the oxidative cleavage of the L-tryptophan (L-Trp) pyrrole ring and converts L-tryptophan to N-formyl-L-kynurenine. Catalyzes the oxidative cleavage of the indole moiety.</text>
</comment>
<comment type="catalytic activity">
    <reaction evidence="1">
        <text>L-tryptophan + O2 = N-formyl-L-kynurenine</text>
        <dbReference type="Rhea" id="RHEA:24536"/>
        <dbReference type="ChEBI" id="CHEBI:15379"/>
        <dbReference type="ChEBI" id="CHEBI:57912"/>
        <dbReference type="ChEBI" id="CHEBI:58629"/>
        <dbReference type="EC" id="1.13.11.11"/>
    </reaction>
</comment>
<comment type="cofactor">
    <cofactor evidence="1">
        <name>heme</name>
        <dbReference type="ChEBI" id="CHEBI:30413"/>
    </cofactor>
    <text evidence="1">Binds 1 heme group per subunit.</text>
</comment>
<comment type="pathway">
    <text evidence="1">Amino-acid degradation; L-tryptophan degradation via kynurenine pathway; L-kynurenine from L-tryptophan: step 1/2.</text>
</comment>
<comment type="subunit">
    <text evidence="1">Homotetramer.</text>
</comment>
<comment type="similarity">
    <text evidence="1">Belongs to the tryptophan 2,3-dioxygenase family.</text>
</comment>
<feature type="chain" id="PRO_0000360089" description="Tryptophan 2,3-dioxygenase">
    <location>
        <begin position="1"/>
        <end position="359"/>
    </location>
</feature>
<feature type="binding site" evidence="1">
    <location>
        <begin position="38"/>
        <end position="42"/>
    </location>
    <ligand>
        <name>substrate</name>
    </ligand>
</feature>
<feature type="binding site" evidence="1">
    <location>
        <position position="109"/>
    </location>
    <ligand>
        <name>substrate</name>
    </ligand>
</feature>
<feature type="binding site" description="axial binding residue" evidence="1">
    <location>
        <position position="295"/>
    </location>
    <ligand>
        <name>heme</name>
        <dbReference type="ChEBI" id="CHEBI:30413"/>
    </ligand>
    <ligandPart>
        <name>Fe</name>
        <dbReference type="ChEBI" id="CHEBI:18248"/>
    </ligandPart>
</feature>
<feature type="binding site" evidence="1">
    <location>
        <position position="309"/>
    </location>
    <ligand>
        <name>substrate</name>
    </ligand>
</feature>
<protein>
    <recommendedName>
        <fullName evidence="1">Tryptophan 2,3-dioxygenase</fullName>
        <shortName evidence="1">TDO</shortName>
        <ecNumber evidence="1">1.13.11.11</ecNumber>
    </recommendedName>
    <alternativeName>
        <fullName evidence="1">Tryptamin 2,3-dioxygenase</fullName>
    </alternativeName>
    <alternativeName>
        <fullName evidence="1">Tryptophan oxygenase</fullName>
        <shortName evidence="1">TO</shortName>
        <shortName evidence="1">TRPO</shortName>
    </alternativeName>
    <alternativeName>
        <fullName evidence="1">Tryptophan pyrrolase</fullName>
    </alternativeName>
    <alternativeName>
        <fullName evidence="1">Tryptophanase</fullName>
    </alternativeName>
</protein>
<dbReference type="EC" id="1.13.11.11" evidence="1"/>
<dbReference type="EMBL" id="BX842650">
    <property type="protein sequence ID" value="CAE79669.1"/>
    <property type="molecule type" value="Genomic_DNA"/>
</dbReference>
<dbReference type="RefSeq" id="WP_011164271.1">
    <property type="nucleotide sequence ID" value="NC_005363.1"/>
</dbReference>
<dbReference type="SMR" id="Q6MM37"/>
<dbReference type="STRING" id="264462.Bd1810"/>
<dbReference type="GeneID" id="93012782"/>
<dbReference type="KEGG" id="bba:Bd1810"/>
<dbReference type="eggNOG" id="COG3483">
    <property type="taxonomic scope" value="Bacteria"/>
</dbReference>
<dbReference type="HOGENOM" id="CLU_045599_1_1_7"/>
<dbReference type="UniPathway" id="UPA00333">
    <property type="reaction ID" value="UER00453"/>
</dbReference>
<dbReference type="Proteomes" id="UP000008080">
    <property type="component" value="Chromosome"/>
</dbReference>
<dbReference type="GO" id="GO:0020037">
    <property type="term" value="F:heme binding"/>
    <property type="evidence" value="ECO:0000250"/>
    <property type="project" value="UniProtKB"/>
</dbReference>
<dbReference type="GO" id="GO:0046872">
    <property type="term" value="F:metal ion binding"/>
    <property type="evidence" value="ECO:0007669"/>
    <property type="project" value="UniProtKB-KW"/>
</dbReference>
<dbReference type="GO" id="GO:0004833">
    <property type="term" value="F:tryptophan 2,3-dioxygenase activity"/>
    <property type="evidence" value="ECO:0000250"/>
    <property type="project" value="UniProtKB"/>
</dbReference>
<dbReference type="GO" id="GO:0019442">
    <property type="term" value="P:L-tryptophan catabolic process to acetyl-CoA"/>
    <property type="evidence" value="ECO:0007669"/>
    <property type="project" value="TreeGrafter"/>
</dbReference>
<dbReference type="GO" id="GO:0019441">
    <property type="term" value="P:L-tryptophan catabolic process to kynurenine"/>
    <property type="evidence" value="ECO:0000250"/>
    <property type="project" value="UniProtKB"/>
</dbReference>
<dbReference type="Gene3D" id="1.10.287.3810">
    <property type="match status" value="1"/>
</dbReference>
<dbReference type="Gene3D" id="1.20.58.480">
    <property type="match status" value="1"/>
</dbReference>
<dbReference type="HAMAP" id="MF_01972">
    <property type="entry name" value="T23O"/>
    <property type="match status" value="1"/>
</dbReference>
<dbReference type="InterPro" id="IPR037217">
    <property type="entry name" value="Trp/Indoleamine_2_3_dOase-like"/>
</dbReference>
<dbReference type="InterPro" id="IPR004981">
    <property type="entry name" value="Trp_2_3_dOase"/>
</dbReference>
<dbReference type="PANTHER" id="PTHR10138">
    <property type="entry name" value="TRYPTOPHAN 2,3-DIOXYGENASE"/>
    <property type="match status" value="1"/>
</dbReference>
<dbReference type="PANTHER" id="PTHR10138:SF0">
    <property type="entry name" value="TRYPTOPHAN 2,3-DIOXYGENASE"/>
    <property type="match status" value="1"/>
</dbReference>
<dbReference type="Pfam" id="PF03301">
    <property type="entry name" value="Trp_dioxygenase"/>
    <property type="match status" value="1"/>
</dbReference>
<dbReference type="SUPFAM" id="SSF140959">
    <property type="entry name" value="Indolic compounds 2,3-dioxygenase-like"/>
    <property type="match status" value="1"/>
</dbReference>